<sequence>MASFKLMSSSNSDLSRRNSSSASSSPSIRSSHHLRPNPHADHSRISFAYGGGVNDYTFASDSKPFEMAIDVDRSIGDRNSVNNGKSVDDVWKEIVSGEQKTIMMKEEEPEDIMTLEDFLAKAEMDEGASDEIDVKIPTERLNNDGSYTFDFPMQRHSSFQMVEGSMGGGVTRGKRGRVMMEAMDKAAAQRQKRMIKNRESAARSRERKQAYQVELETLAAKLEEENEQLLKEIEESTKERYKKLMEVLIPVDEKPRPPSRPLSRSHSLEW</sequence>
<keyword id="KW-0238">DNA-binding</keyword>
<keyword id="KW-0539">Nucleus</keyword>
<keyword id="KW-0597">Phosphoprotein</keyword>
<keyword id="KW-1185">Reference proteome</keyword>
<keyword id="KW-0804">Transcription</keyword>
<keyword id="KW-0805">Transcription regulation</keyword>
<comment type="function">
    <text evidence="4">Binds to the G-box motif (5'-CCACGTGG-3') of the rbcS-1A gene promoter. G-box and G-box-like motifs are cis-acting elements defined in promoters of certain plant genes which are regulated by such diverse stimuli as light-induction or hormone control.</text>
</comment>
<comment type="subunit">
    <text>DNA-binding heterodimer with GBF2 and GBF3; non DNA-binding homodimer.</text>
</comment>
<comment type="interaction">
    <interactant intactId="EBI-15192551">
        <id>P42777</id>
    </interactant>
    <interactant intactId="EBI-15192553">
        <id>Q7XJS0</id>
        <label>ASHR1</label>
    </interactant>
    <organismsDiffer>false</organismsDiffer>
    <experiments>3</experiments>
</comment>
<comment type="subcellular location">
    <subcellularLocation>
        <location evidence="2 4">Nucleus</location>
    </subcellularLocation>
</comment>
<comment type="similarity">
    <text evidence="5">Belongs to the bZIP family.</text>
</comment>
<gene>
    <name type="primary">GBF4</name>
    <name type="synonym">BZIP40</name>
    <name type="ordered locus">At1g03970</name>
    <name type="ORF">F21M11.10</name>
</gene>
<dbReference type="EMBL" id="U01823">
    <property type="protein sequence ID" value="AAA18414.1"/>
    <property type="molecule type" value="Unassigned_DNA"/>
</dbReference>
<dbReference type="EMBL" id="AC003027">
    <property type="protein sequence ID" value="AAD10673.1"/>
    <property type="molecule type" value="Genomic_DNA"/>
</dbReference>
<dbReference type="EMBL" id="CP002684">
    <property type="protein sequence ID" value="AEE27640.1"/>
    <property type="molecule type" value="Genomic_DNA"/>
</dbReference>
<dbReference type="EMBL" id="AY087603">
    <property type="protein sequence ID" value="AAM65145.1"/>
    <property type="molecule type" value="mRNA"/>
</dbReference>
<dbReference type="PIR" id="F86170">
    <property type="entry name" value="F86170"/>
</dbReference>
<dbReference type="RefSeq" id="NP_171893.1">
    <property type="nucleotide sequence ID" value="NM_100278.3"/>
</dbReference>
<dbReference type="SMR" id="P42777"/>
<dbReference type="BioGRID" id="24591">
    <property type="interactions" value="10"/>
</dbReference>
<dbReference type="FunCoup" id="P42777">
    <property type="interactions" value="488"/>
</dbReference>
<dbReference type="IntAct" id="P42777">
    <property type="interactions" value="8"/>
</dbReference>
<dbReference type="STRING" id="3702.P42777"/>
<dbReference type="iPTMnet" id="P42777"/>
<dbReference type="PaxDb" id="3702-AT1G03970.1"/>
<dbReference type="ProteomicsDB" id="222181"/>
<dbReference type="EnsemblPlants" id="AT1G03970.1">
    <property type="protein sequence ID" value="AT1G03970.1"/>
    <property type="gene ID" value="AT1G03970"/>
</dbReference>
<dbReference type="GeneID" id="839356"/>
<dbReference type="Gramene" id="AT1G03970.1">
    <property type="protein sequence ID" value="AT1G03970.1"/>
    <property type="gene ID" value="AT1G03970"/>
</dbReference>
<dbReference type="KEGG" id="ath:AT1G03970"/>
<dbReference type="Araport" id="AT1G03970"/>
<dbReference type="TAIR" id="AT1G03970">
    <property type="gene designation" value="GBF4"/>
</dbReference>
<dbReference type="eggNOG" id="ENOG502RXGY">
    <property type="taxonomic scope" value="Eukaryota"/>
</dbReference>
<dbReference type="HOGENOM" id="CLU_043238_2_2_1"/>
<dbReference type="InParanoid" id="P42777"/>
<dbReference type="OMA" id="HADHSRI"/>
<dbReference type="PhylomeDB" id="P42777"/>
<dbReference type="PRO" id="PR:P42777"/>
<dbReference type="Proteomes" id="UP000006548">
    <property type="component" value="Chromosome 1"/>
</dbReference>
<dbReference type="ExpressionAtlas" id="P42777">
    <property type="expression patterns" value="baseline and differential"/>
</dbReference>
<dbReference type="GO" id="GO:0005634">
    <property type="term" value="C:nucleus"/>
    <property type="evidence" value="ECO:0000314"/>
    <property type="project" value="TAIR"/>
</dbReference>
<dbReference type="GO" id="GO:0003677">
    <property type="term" value="F:DNA binding"/>
    <property type="evidence" value="ECO:0000314"/>
    <property type="project" value="TAIR"/>
</dbReference>
<dbReference type="GO" id="GO:0003700">
    <property type="term" value="F:DNA-binding transcription factor activity"/>
    <property type="evidence" value="ECO:0000250"/>
    <property type="project" value="TAIR"/>
</dbReference>
<dbReference type="GO" id="GO:0043565">
    <property type="term" value="F:sequence-specific DNA binding"/>
    <property type="evidence" value="ECO:0000314"/>
    <property type="project" value="TAIR"/>
</dbReference>
<dbReference type="GO" id="GO:0000976">
    <property type="term" value="F:transcription cis-regulatory region binding"/>
    <property type="evidence" value="ECO:0000353"/>
    <property type="project" value="TAIR"/>
</dbReference>
<dbReference type="GO" id="GO:0045893">
    <property type="term" value="P:positive regulation of DNA-templated transcription"/>
    <property type="evidence" value="ECO:0007669"/>
    <property type="project" value="InterPro"/>
</dbReference>
<dbReference type="CDD" id="cd14707">
    <property type="entry name" value="bZIP_plant_BZIP46"/>
    <property type="match status" value="1"/>
</dbReference>
<dbReference type="FunFam" id="1.20.5.170:FF:000036">
    <property type="entry name" value="ABSCISIC ACID-INSENSITIVE 5-like protein 2"/>
    <property type="match status" value="1"/>
</dbReference>
<dbReference type="Gene3D" id="1.20.5.170">
    <property type="match status" value="1"/>
</dbReference>
<dbReference type="InterPro" id="IPR004827">
    <property type="entry name" value="bZIP"/>
</dbReference>
<dbReference type="InterPro" id="IPR043452">
    <property type="entry name" value="BZIP46-like"/>
</dbReference>
<dbReference type="InterPro" id="IPR046347">
    <property type="entry name" value="bZIP_sf"/>
</dbReference>
<dbReference type="PANTHER" id="PTHR22952">
    <property type="entry name" value="CAMP-RESPONSE ELEMENT BINDING PROTEIN-RELATED"/>
    <property type="match status" value="1"/>
</dbReference>
<dbReference type="PANTHER" id="PTHR22952:SF184">
    <property type="entry name" value="G-BOX-BINDING FACTOR 4"/>
    <property type="match status" value="1"/>
</dbReference>
<dbReference type="Pfam" id="PF00170">
    <property type="entry name" value="bZIP_1"/>
    <property type="match status" value="1"/>
</dbReference>
<dbReference type="SMART" id="SM00338">
    <property type="entry name" value="BRLZ"/>
    <property type="match status" value="1"/>
</dbReference>
<dbReference type="SUPFAM" id="SSF57959">
    <property type="entry name" value="Leucine zipper domain"/>
    <property type="match status" value="1"/>
</dbReference>
<dbReference type="PROSITE" id="PS50217">
    <property type="entry name" value="BZIP"/>
    <property type="match status" value="1"/>
</dbReference>
<dbReference type="PROSITE" id="PS00036">
    <property type="entry name" value="BZIP_BASIC"/>
    <property type="match status" value="1"/>
</dbReference>
<accession>P42777</accession>
<reference key="1">
    <citation type="journal article" date="1994" name="Proc. Natl. Acad. Sci. U.S.A.">
        <title>Isolation and characterization of a fourth Arabidopsis thaliana G-box-binding factor, which has similarities to Fos oncoprotein.</title>
        <authorList>
            <person name="Menkens A.E."/>
            <person name="Cashmore A.R."/>
        </authorList>
    </citation>
    <scope>NUCLEOTIDE SEQUENCE</scope>
    <scope>FUNCTION</scope>
    <scope>SUBCELLULAR LOCATION</scope>
    <scope>INTERACTION WITH GBF2 AND GBF3</scope>
    <source>
        <strain>cv. Columbia</strain>
    </source>
</reference>
<reference key="2">
    <citation type="journal article" date="2000" name="Nature">
        <title>Sequence and analysis of chromosome 1 of the plant Arabidopsis thaliana.</title>
        <authorList>
            <person name="Theologis A."/>
            <person name="Ecker J.R."/>
            <person name="Palm C.J."/>
            <person name="Federspiel N.A."/>
            <person name="Kaul S."/>
            <person name="White O."/>
            <person name="Alonso J."/>
            <person name="Altafi H."/>
            <person name="Araujo R."/>
            <person name="Bowman C.L."/>
            <person name="Brooks S.Y."/>
            <person name="Buehler E."/>
            <person name="Chan A."/>
            <person name="Chao Q."/>
            <person name="Chen H."/>
            <person name="Cheuk R.F."/>
            <person name="Chin C.W."/>
            <person name="Chung M.K."/>
            <person name="Conn L."/>
            <person name="Conway A.B."/>
            <person name="Conway A.R."/>
            <person name="Creasy T.H."/>
            <person name="Dewar K."/>
            <person name="Dunn P."/>
            <person name="Etgu P."/>
            <person name="Feldblyum T.V."/>
            <person name="Feng J.-D."/>
            <person name="Fong B."/>
            <person name="Fujii C.Y."/>
            <person name="Gill J.E."/>
            <person name="Goldsmith A.D."/>
            <person name="Haas B."/>
            <person name="Hansen N.F."/>
            <person name="Hughes B."/>
            <person name="Huizar L."/>
            <person name="Hunter J.L."/>
            <person name="Jenkins J."/>
            <person name="Johnson-Hopson C."/>
            <person name="Khan S."/>
            <person name="Khaykin E."/>
            <person name="Kim C.J."/>
            <person name="Koo H.L."/>
            <person name="Kremenetskaia I."/>
            <person name="Kurtz D.B."/>
            <person name="Kwan A."/>
            <person name="Lam B."/>
            <person name="Langin-Hooper S."/>
            <person name="Lee A."/>
            <person name="Lee J.M."/>
            <person name="Lenz C.A."/>
            <person name="Li J.H."/>
            <person name="Li Y.-P."/>
            <person name="Lin X."/>
            <person name="Liu S.X."/>
            <person name="Liu Z.A."/>
            <person name="Luros J.S."/>
            <person name="Maiti R."/>
            <person name="Marziali A."/>
            <person name="Militscher J."/>
            <person name="Miranda M."/>
            <person name="Nguyen M."/>
            <person name="Nierman W.C."/>
            <person name="Osborne B.I."/>
            <person name="Pai G."/>
            <person name="Peterson J."/>
            <person name="Pham P.K."/>
            <person name="Rizzo M."/>
            <person name="Rooney T."/>
            <person name="Rowley D."/>
            <person name="Sakano H."/>
            <person name="Salzberg S.L."/>
            <person name="Schwartz J.R."/>
            <person name="Shinn P."/>
            <person name="Southwick A.M."/>
            <person name="Sun H."/>
            <person name="Tallon L.J."/>
            <person name="Tambunga G."/>
            <person name="Toriumi M.J."/>
            <person name="Town C.D."/>
            <person name="Utterback T."/>
            <person name="Van Aken S."/>
            <person name="Vaysberg M."/>
            <person name="Vysotskaia V.S."/>
            <person name="Walker M."/>
            <person name="Wu D."/>
            <person name="Yu G."/>
            <person name="Fraser C.M."/>
            <person name="Venter J.C."/>
            <person name="Davis R.W."/>
        </authorList>
    </citation>
    <scope>NUCLEOTIDE SEQUENCE [LARGE SCALE GENOMIC DNA]</scope>
    <source>
        <strain>cv. Columbia</strain>
    </source>
</reference>
<reference key="3">
    <citation type="journal article" date="2017" name="Plant J.">
        <title>Araport11: a complete reannotation of the Arabidopsis thaliana reference genome.</title>
        <authorList>
            <person name="Cheng C.Y."/>
            <person name="Krishnakumar V."/>
            <person name="Chan A.P."/>
            <person name="Thibaud-Nissen F."/>
            <person name="Schobel S."/>
            <person name="Town C.D."/>
        </authorList>
    </citation>
    <scope>GENOME REANNOTATION</scope>
    <source>
        <strain>cv. Columbia</strain>
    </source>
</reference>
<reference key="4">
    <citation type="submission" date="2002-03" db="EMBL/GenBank/DDBJ databases">
        <title>Full-length cDNA from Arabidopsis thaliana.</title>
        <authorList>
            <person name="Brover V.V."/>
            <person name="Troukhan M.E."/>
            <person name="Alexandrov N.A."/>
            <person name="Lu Y.-P."/>
            <person name="Flavell R.B."/>
            <person name="Feldmann K.A."/>
        </authorList>
    </citation>
    <scope>NUCLEOTIDE SEQUENCE [LARGE SCALE MRNA]</scope>
</reference>
<reference key="5">
    <citation type="journal article" date="2002" name="Trends Plant Sci.">
        <title>bZIP transcription factors in Arabidopsis.</title>
        <authorList>
            <person name="Jakoby M."/>
            <person name="Weisshaar B."/>
            <person name="Droege-Laser W."/>
            <person name="Vicente-Carbajosa J."/>
            <person name="Tiedemann J."/>
            <person name="Kroj T."/>
            <person name="Parcy F."/>
        </authorList>
    </citation>
    <scope>GENE FAMILY</scope>
    <scope>NOMENCLATURE</scope>
</reference>
<name>GBF4_ARATH</name>
<feature type="chain" id="PRO_0000076568" description="G-box-binding factor 4">
    <location>
        <begin position="1"/>
        <end position="270"/>
    </location>
</feature>
<feature type="domain" description="bZIP" evidence="2">
    <location>
        <begin position="187"/>
        <end position="250"/>
    </location>
</feature>
<feature type="region of interest" description="Disordered" evidence="3">
    <location>
        <begin position="1"/>
        <end position="46"/>
    </location>
</feature>
<feature type="region of interest" description="Basic motif" evidence="2">
    <location>
        <begin position="190"/>
        <end position="208"/>
    </location>
</feature>
<feature type="region of interest" description="Leucine-zipper" evidence="2">
    <location>
        <begin position="215"/>
        <end position="229"/>
    </location>
</feature>
<feature type="region of interest" description="Disordered" evidence="3">
    <location>
        <begin position="250"/>
        <end position="270"/>
    </location>
</feature>
<feature type="compositionally biased region" description="Low complexity" evidence="3">
    <location>
        <begin position="8"/>
        <end position="29"/>
    </location>
</feature>
<feature type="compositionally biased region" description="Low complexity" evidence="3">
    <location>
        <begin position="261"/>
        <end position="270"/>
    </location>
</feature>
<feature type="modified residue" description="Phosphoserine" evidence="1">
    <location>
        <position position="27"/>
    </location>
</feature>
<organism>
    <name type="scientific">Arabidopsis thaliana</name>
    <name type="common">Mouse-ear cress</name>
    <dbReference type="NCBI Taxonomy" id="3702"/>
    <lineage>
        <taxon>Eukaryota</taxon>
        <taxon>Viridiplantae</taxon>
        <taxon>Streptophyta</taxon>
        <taxon>Embryophyta</taxon>
        <taxon>Tracheophyta</taxon>
        <taxon>Spermatophyta</taxon>
        <taxon>Magnoliopsida</taxon>
        <taxon>eudicotyledons</taxon>
        <taxon>Gunneridae</taxon>
        <taxon>Pentapetalae</taxon>
        <taxon>rosids</taxon>
        <taxon>malvids</taxon>
        <taxon>Brassicales</taxon>
        <taxon>Brassicaceae</taxon>
        <taxon>Camelineae</taxon>
        <taxon>Arabidopsis</taxon>
    </lineage>
</organism>
<protein>
    <recommendedName>
        <fullName>G-box-binding factor 4</fullName>
    </recommendedName>
    <alternativeName>
        <fullName>bZIP transcription factor 40</fullName>
        <shortName>AtbZIP40</shortName>
    </alternativeName>
</protein>
<evidence type="ECO:0000250" key="1">
    <source>
        <dbReference type="UniProtKB" id="Q9LES3"/>
    </source>
</evidence>
<evidence type="ECO:0000255" key="2">
    <source>
        <dbReference type="PROSITE-ProRule" id="PRU00978"/>
    </source>
</evidence>
<evidence type="ECO:0000256" key="3">
    <source>
        <dbReference type="SAM" id="MobiDB-lite"/>
    </source>
</evidence>
<evidence type="ECO:0000269" key="4">
    <source>
    </source>
</evidence>
<evidence type="ECO:0000305" key="5"/>
<proteinExistence type="evidence at protein level"/>